<proteinExistence type="evidence at protein level"/>
<accession>Q46M57</accession>
<accession>P10086</accession>
<accession>P42429</accession>
<sequence>MEFRQLRYFVAAAEEGNVGAAARRLHISQPPVTRQIHALEQHLGVLLFERSARGVQLTPAGAAFLEDARRMLELGRTSVDRSRAASRGEIGQLDIGYLGTAIYQTVPALLHAFTQAVPGATLSLALMPKVRQIEALRAGTIHLGVGRFYPQEPGITVEHLHYERLYIAAGSSIARQLRQDPTLLRLKSESLVLFPKEGRPSFADEVIALMRRAGVEPRVTAIVEDVNAALGLVAAGAGVTLVPASVAAIRRPFVRTMEMADASDKVPVSLTYLTDSRVPVLRAFLDVARRGKGQK</sequence>
<comment type="function">
    <text>Involved in the regulation of 3-chlorocatechol degradation. Transcriptional regulator of tfdB expression. Acts as a repressor in the absence of its effector (either 2-cis-chlorodiene lactone or chloromaleylacetate) but acts as an activator when its effector is present.</text>
</comment>
<comment type="subcellular location">
    <subcellularLocation>
        <location>Cytoplasm</location>
    </subcellularLocation>
</comment>
<comment type="similarity">
    <text evidence="2">Belongs to the LysR transcriptional regulatory family.</text>
</comment>
<comment type="caution">
    <text evidence="2">The products of the genes tfdR and tfdS were originally thought to be identical but in fact they differ by one residue (amino acid 264 which is Asp in tfdR and Ala in tfdS).</text>
</comment>
<protein>
    <recommendedName>
        <fullName>HTH-type transcriptional regulator TdfR</fullName>
    </recommendedName>
</protein>
<keyword id="KW-0010">Activator</keyword>
<keyword id="KW-0058">Aromatic hydrocarbons catabolism</keyword>
<keyword id="KW-0963">Cytoplasm</keyword>
<keyword id="KW-0238">DNA-binding</keyword>
<keyword id="KW-0614">Plasmid</keyword>
<keyword id="KW-0678">Repressor</keyword>
<keyword id="KW-0804">Transcription</keyword>
<keyword id="KW-0805">Transcription regulation</keyword>
<dbReference type="EMBL" id="M98445">
    <property type="protein sequence ID" value="AAA65063.1"/>
    <property type="molecule type" value="Genomic_DNA"/>
</dbReference>
<dbReference type="EMBL" id="AY365053">
    <property type="protein sequence ID" value="AAR31048.1"/>
    <property type="molecule type" value="Genomic_DNA"/>
</dbReference>
<dbReference type="EMBL" id="CP000093">
    <property type="protein sequence ID" value="AAZ65773.1"/>
    <property type="molecule type" value="Genomic_DNA"/>
</dbReference>
<dbReference type="RefSeq" id="WP_011178395.1">
    <property type="nucleotide sequence ID" value="NZ_AY365053.1"/>
</dbReference>
<dbReference type="SMR" id="Q46M57"/>
<dbReference type="KEGG" id="reu:Reut_D6475"/>
<dbReference type="HOGENOM" id="CLU_039613_6_4_4"/>
<dbReference type="OrthoDB" id="5292387at2"/>
<dbReference type="GO" id="GO:0005737">
    <property type="term" value="C:cytoplasm"/>
    <property type="evidence" value="ECO:0007669"/>
    <property type="project" value="UniProtKB-SubCell"/>
</dbReference>
<dbReference type="GO" id="GO:0032993">
    <property type="term" value="C:protein-DNA complex"/>
    <property type="evidence" value="ECO:0007669"/>
    <property type="project" value="TreeGrafter"/>
</dbReference>
<dbReference type="GO" id="GO:0003677">
    <property type="term" value="F:DNA binding"/>
    <property type="evidence" value="ECO:0007669"/>
    <property type="project" value="UniProtKB-KW"/>
</dbReference>
<dbReference type="GO" id="GO:0003700">
    <property type="term" value="F:DNA-binding transcription factor activity"/>
    <property type="evidence" value="ECO:0007669"/>
    <property type="project" value="InterPro"/>
</dbReference>
<dbReference type="GO" id="GO:0009056">
    <property type="term" value="P:catabolic process"/>
    <property type="evidence" value="ECO:0007669"/>
    <property type="project" value="UniProtKB-KW"/>
</dbReference>
<dbReference type="CDD" id="cd08446">
    <property type="entry name" value="PBP2_Chlorocatechol"/>
    <property type="match status" value="1"/>
</dbReference>
<dbReference type="FunFam" id="1.10.10.10:FF:000001">
    <property type="entry name" value="LysR family transcriptional regulator"/>
    <property type="match status" value="1"/>
</dbReference>
<dbReference type="Gene3D" id="3.40.190.10">
    <property type="entry name" value="Periplasmic binding protein-like II"/>
    <property type="match status" value="2"/>
</dbReference>
<dbReference type="Gene3D" id="1.10.10.10">
    <property type="entry name" value="Winged helix-like DNA-binding domain superfamily/Winged helix DNA-binding domain"/>
    <property type="match status" value="1"/>
</dbReference>
<dbReference type="InterPro" id="IPR005119">
    <property type="entry name" value="LysR_subst-bd"/>
</dbReference>
<dbReference type="InterPro" id="IPR000847">
    <property type="entry name" value="Tscrpt_reg_HTH_LysR"/>
</dbReference>
<dbReference type="InterPro" id="IPR036388">
    <property type="entry name" value="WH-like_DNA-bd_sf"/>
</dbReference>
<dbReference type="InterPro" id="IPR036390">
    <property type="entry name" value="WH_DNA-bd_sf"/>
</dbReference>
<dbReference type="PANTHER" id="PTHR30346:SF17">
    <property type="entry name" value="LYSR FAMILY TRANSCRIPTIONAL REGULATOR"/>
    <property type="match status" value="1"/>
</dbReference>
<dbReference type="PANTHER" id="PTHR30346">
    <property type="entry name" value="TRANSCRIPTIONAL DUAL REGULATOR HCAR-RELATED"/>
    <property type="match status" value="1"/>
</dbReference>
<dbReference type="Pfam" id="PF00126">
    <property type="entry name" value="HTH_1"/>
    <property type="match status" value="1"/>
</dbReference>
<dbReference type="Pfam" id="PF03466">
    <property type="entry name" value="LysR_substrate"/>
    <property type="match status" value="1"/>
</dbReference>
<dbReference type="PRINTS" id="PR00039">
    <property type="entry name" value="HTHLYSR"/>
</dbReference>
<dbReference type="SUPFAM" id="SSF53850">
    <property type="entry name" value="Periplasmic binding protein-like II"/>
    <property type="match status" value="1"/>
</dbReference>
<dbReference type="SUPFAM" id="SSF46785">
    <property type="entry name" value="Winged helix' DNA-binding domain"/>
    <property type="match status" value="1"/>
</dbReference>
<dbReference type="PROSITE" id="PS50931">
    <property type="entry name" value="HTH_LYSR"/>
    <property type="match status" value="1"/>
</dbReference>
<geneLocation type="plasmid">
    <name>pJP4</name>
</geneLocation>
<geneLocation type="plasmid">
    <name>pPJ4</name>
</geneLocation>
<reference key="1">
    <citation type="journal article" date="1994" name="J. Bacteriol.">
        <title>Analysis of duplicated gene sequences associated with tfdR and tfdS in Alcaligenes eutrophus JMP134.</title>
        <authorList>
            <person name="Matrubutham U."/>
            <person name="Harker A.R."/>
        </authorList>
    </citation>
    <scope>NUCLEOTIDE SEQUENCE [GENOMIC DNA]</scope>
    <scope>DNA-BINDING</scope>
    <source>
        <plasmid>pJP4</plasmid>
    </source>
</reference>
<reference key="2">
    <citation type="journal article" date="2004" name="Environ. Microbiol.">
        <title>Genetic organization of the catabolic plasmid pJP4 from Ralstonia eutropha JMP134 (pJP4) reveals mechanisms of adaptation to chloroaromatic pollutants and evolution of specialized chloroaromatic degradation pathways.</title>
        <authorList>
            <person name="Trefault N."/>
            <person name="De la Iglesia R."/>
            <person name="Molina A.M."/>
            <person name="Manzano M."/>
            <person name="Ledger T."/>
            <person name="Perez-Pantoja D."/>
            <person name="Sanchez M.A."/>
            <person name="Stuardo M."/>
            <person name="Gonzalez B."/>
        </authorList>
    </citation>
    <scope>NUCLEOTIDE SEQUENCE [GENOMIC DNA]</scope>
    <source>
        <plasmid>pJP4</plasmid>
    </source>
</reference>
<reference key="3">
    <citation type="journal article" date="2010" name="PLoS ONE">
        <title>The complete multipartite genome sequence of Cupriavidus necator JMP134, a versatile pollutant degrader.</title>
        <authorList>
            <person name="Lykidis A."/>
            <person name="Perez-Pantoja D."/>
            <person name="Ledger T."/>
            <person name="Mavromatis K."/>
            <person name="Anderson I.J."/>
            <person name="Ivanova N.N."/>
            <person name="Hooper S.D."/>
            <person name="Lapidus A."/>
            <person name="Lucas S."/>
            <person name="Gonzalez B."/>
            <person name="Kyrpides N.C."/>
        </authorList>
    </citation>
    <scope>NUCLEOTIDE SEQUENCE [LARGE SCALE GENOMIC DNA]</scope>
    <source>
        <strain>JMP134 / LMG 1197</strain>
        <plasmid>pPJ4</plasmid>
    </source>
</reference>
<reference key="4">
    <citation type="journal article" date="1988" name="Proc. Natl. Acad. Sci. U.S.A.">
        <title>A large family of bacterial activator proteins.</title>
        <authorList>
            <person name="Henikoff S."/>
            <person name="Haughn G.W."/>
            <person name="Calvo J.M."/>
            <person name="Wallace J.C."/>
        </authorList>
    </citation>
    <scope>IDENTIFICATION OF PROTEIN</scope>
    <scope>POSSIBLE DNA-BINDING REGION</scope>
</reference>
<organism>
    <name type="scientific">Cupriavidus pinatubonensis (strain JMP 134 / LMG 1197)</name>
    <name type="common">Cupriavidus necator (strain JMP 134)</name>
    <dbReference type="NCBI Taxonomy" id="264198"/>
    <lineage>
        <taxon>Bacteria</taxon>
        <taxon>Pseudomonadati</taxon>
        <taxon>Pseudomonadota</taxon>
        <taxon>Betaproteobacteria</taxon>
        <taxon>Burkholderiales</taxon>
        <taxon>Burkholderiaceae</taxon>
        <taxon>Cupriavidus</taxon>
    </lineage>
</organism>
<name>TFDR_CUPPJ</name>
<gene>
    <name type="primary">tfdR</name>
    <name type="ordered locus">Reut_D6475</name>
</gene>
<feature type="chain" id="PRO_0000105760" description="HTH-type transcriptional regulator TdfR">
    <location>
        <begin position="1"/>
        <end position="295"/>
    </location>
</feature>
<feature type="domain" description="HTH lysR-type" evidence="1">
    <location>
        <begin position="1"/>
        <end position="58"/>
    </location>
</feature>
<feature type="DNA-binding region" description="H-T-H motif" evidence="1">
    <location>
        <begin position="18"/>
        <end position="37"/>
    </location>
</feature>
<evidence type="ECO:0000255" key="1">
    <source>
        <dbReference type="PROSITE-ProRule" id="PRU00253"/>
    </source>
</evidence>
<evidence type="ECO:0000305" key="2"/>